<sequence length="183" mass="20047">MTGRGIPGAVAVHHVAYTVPDLDQAVEFFTEVIGAELAYTLVQDAAGDWMTRKLDVDATATARIAMLRLGPVTNLELFEYAAPDQRRQLPRNSDWGGHHLAIHVADVDAAAEYLRAQPGVRVLGDPETITDGPIAGDRWVYFATPWGMQLELINLPAGAPFEQQTEVRLYQPEGSWSDHRGAS</sequence>
<keyword id="KW-0045">Antibiotic biosynthesis</keyword>
<keyword id="KW-0413">Isomerase</keyword>
<keyword id="KW-0479">Metal-binding</keyword>
<dbReference type="EC" id="5.1.3.33" evidence="2"/>
<dbReference type="EMBL" id="EF120454">
    <property type="protein sequence ID" value="ABL74382.1"/>
    <property type="molecule type" value="Genomic_DNA"/>
</dbReference>
<dbReference type="SMR" id="A1YPR3"/>
<dbReference type="KEGG" id="ag:ABL74382"/>
<dbReference type="BRENDA" id="5.1.3.33">
    <property type="organism ID" value="136"/>
</dbReference>
<dbReference type="GO" id="GO:0046872">
    <property type="term" value="F:metal ion binding"/>
    <property type="evidence" value="ECO:0007669"/>
    <property type="project" value="UniProtKB-KW"/>
</dbReference>
<dbReference type="GO" id="GO:0004493">
    <property type="term" value="F:methylmalonyl-CoA epimerase activity"/>
    <property type="evidence" value="ECO:0007669"/>
    <property type="project" value="TreeGrafter"/>
</dbReference>
<dbReference type="GO" id="GO:0017000">
    <property type="term" value="P:antibiotic biosynthetic process"/>
    <property type="evidence" value="ECO:0007669"/>
    <property type="project" value="UniProtKB-KW"/>
</dbReference>
<dbReference type="GO" id="GO:0046491">
    <property type="term" value="P:L-methylmalonyl-CoA metabolic process"/>
    <property type="evidence" value="ECO:0007669"/>
    <property type="project" value="TreeGrafter"/>
</dbReference>
<dbReference type="CDD" id="cd16361">
    <property type="entry name" value="VOC_ShValD_like"/>
    <property type="match status" value="1"/>
</dbReference>
<dbReference type="Gene3D" id="3.10.180.10">
    <property type="entry name" value="2,3-Dihydroxybiphenyl 1,2-Dioxygenase, domain 1"/>
    <property type="match status" value="1"/>
</dbReference>
<dbReference type="InterPro" id="IPR029068">
    <property type="entry name" value="Glyas_Bleomycin-R_OHBP_Dase"/>
</dbReference>
<dbReference type="InterPro" id="IPR004360">
    <property type="entry name" value="Glyas_Fos-R_dOase_dom"/>
</dbReference>
<dbReference type="InterPro" id="IPR051785">
    <property type="entry name" value="MMCE/EMCE_epimerase"/>
</dbReference>
<dbReference type="InterPro" id="IPR037523">
    <property type="entry name" value="VOC"/>
</dbReference>
<dbReference type="PANTHER" id="PTHR43048:SF6">
    <property type="entry name" value="BLR8189 PROTEIN"/>
    <property type="match status" value="1"/>
</dbReference>
<dbReference type="PANTHER" id="PTHR43048">
    <property type="entry name" value="METHYLMALONYL-COA EPIMERASE"/>
    <property type="match status" value="1"/>
</dbReference>
<dbReference type="Pfam" id="PF00903">
    <property type="entry name" value="Glyoxalase"/>
    <property type="match status" value="1"/>
</dbReference>
<dbReference type="SUPFAM" id="SSF54593">
    <property type="entry name" value="Glyoxalase/Bleomycin resistance protein/Dihydroxybiphenyl dioxygenase"/>
    <property type="match status" value="1"/>
</dbReference>
<dbReference type="PROSITE" id="PS51819">
    <property type="entry name" value="VOC"/>
    <property type="match status" value="1"/>
</dbReference>
<name>CETB_ACTSX</name>
<reference key="1">
    <citation type="journal article" date="2007" name="ChemBioChem">
        <title>A comparative analysis of the sugar phosphate cyclase superfamily involved in primary and secondary metabolism.</title>
        <authorList>
            <person name="Wu X."/>
            <person name="Flatt P.M."/>
            <person name="Schlorke O."/>
            <person name="Zeeck A."/>
            <person name="Dairi T."/>
            <person name="Mahmud T."/>
        </authorList>
    </citation>
    <scope>NUCLEOTIDE SEQUENCE [GENOMIC DNA]</scope>
    <source>
        <strain>Lu 9419</strain>
    </source>
</reference>
<reference key="2">
    <citation type="journal article" date="2009" name="ChemBioChem">
        <title>Biosynthetic gene cluster of cetoniacytone A, an unusual aminocyclitol from the endosymbiotic Bacterium Actinomyces sp. Lu 9419.</title>
        <authorList>
            <person name="Wu X."/>
            <person name="Flatt P.M."/>
            <person name="Xu H."/>
            <person name="Mahmud T."/>
        </authorList>
    </citation>
    <scope>NUCLEOTIDE SEQUENCE [GENOMIC DNA]</scope>
    <scope>FUNCTION</scope>
    <scope>CATALYTIC ACTIVITY</scope>
    <scope>COFACTOR</scope>
    <scope>PATHWAY</scope>
    <scope>SUBUNIT</scope>
    <scope>MUTAGENESIS OF HIS-14; GLU-76; HIS-99 AND GLU-151</scope>
    <source>
        <strain>Lu 9419</strain>
    </source>
</reference>
<gene>
    <name evidence="3" type="primary">cetB</name>
</gene>
<feature type="chain" id="PRO_0000435441" description="2-epi-5-epi-valiolone epimerase">
    <location>
        <begin position="1"/>
        <end position="183"/>
    </location>
</feature>
<feature type="domain" description="VOC" evidence="1">
    <location>
        <begin position="11"/>
        <end position="155"/>
    </location>
</feature>
<feature type="binding site" evidence="5">
    <location>
        <position position="14"/>
    </location>
    <ligand>
        <name>a divalent metal cation</name>
        <dbReference type="ChEBI" id="CHEBI:60240"/>
    </ligand>
</feature>
<feature type="binding site" evidence="5">
    <location>
        <position position="76"/>
    </location>
    <ligand>
        <name>a divalent metal cation</name>
        <dbReference type="ChEBI" id="CHEBI:60240"/>
    </ligand>
</feature>
<feature type="binding site" evidence="5">
    <location>
        <position position="99"/>
    </location>
    <ligand>
        <name>a divalent metal cation</name>
        <dbReference type="ChEBI" id="CHEBI:60240"/>
    </ligand>
</feature>
<feature type="binding site" evidence="5">
    <location>
        <position position="151"/>
    </location>
    <ligand>
        <name>a divalent metal cation</name>
        <dbReference type="ChEBI" id="CHEBI:60240"/>
    </ligand>
</feature>
<feature type="mutagenesis site" description="Lack of activity; when associated with G-76; G-99 or G-151." evidence="2">
    <original>H</original>
    <variation>G</variation>
    <location>
        <position position="14"/>
    </location>
</feature>
<feature type="mutagenesis site" description="Lack of activity; when associated with G-14; G-99 or G-151." evidence="2">
    <original>E</original>
    <variation>G</variation>
    <location>
        <position position="76"/>
    </location>
</feature>
<feature type="mutagenesis site" description="Lack of activity; when associated with G-14; G-76 or G-151." evidence="2">
    <original>H</original>
    <variation>G</variation>
    <location>
        <position position="99"/>
    </location>
</feature>
<feature type="mutagenesis site" description="Lack of activity; when associated with G-14; G-76 or G-99." evidence="2">
    <original>E</original>
    <variation>G</variation>
    <location>
        <position position="151"/>
    </location>
</feature>
<comment type="function">
    <text evidence="2">Catalyzes the epimerization of 2-epi-5-epi-valiolone to 5-epi-valiolone. Involved in cetoniacytone A biosynthesis.</text>
</comment>
<comment type="catalytic activity">
    <reaction evidence="2">
        <text>2-epi-5-epi-valiolone = 5-epi-valiolone</text>
        <dbReference type="Rhea" id="RHEA:45564"/>
        <dbReference type="ChEBI" id="CHEBI:84187"/>
        <dbReference type="ChEBI" id="CHEBI:84361"/>
        <dbReference type="EC" id="5.1.3.33"/>
    </reaction>
</comment>
<comment type="cofactor">
    <cofactor evidence="2">
        <name>a divalent metal cation</name>
        <dbReference type="ChEBI" id="CHEBI:60240"/>
    </cofactor>
</comment>
<comment type="pathway">
    <text evidence="2">Antibiotic biosynthesis.</text>
</comment>
<comment type="subunit">
    <text evidence="2">Homodimer.</text>
</comment>
<proteinExistence type="evidence at protein level"/>
<organism>
    <name type="scientific">Actinomyces sp</name>
    <dbReference type="NCBI Taxonomy" id="29317"/>
    <lineage>
        <taxon>Bacteria</taxon>
        <taxon>Bacillati</taxon>
        <taxon>Actinomycetota</taxon>
        <taxon>Actinomycetes</taxon>
        <taxon>Actinomycetales</taxon>
        <taxon>Actinomycetaceae</taxon>
        <taxon>Actinomyces</taxon>
    </lineage>
</organism>
<accession>A1YPR3</accession>
<evidence type="ECO:0000255" key="1">
    <source>
        <dbReference type="PROSITE-ProRule" id="PRU01163"/>
    </source>
</evidence>
<evidence type="ECO:0000269" key="2">
    <source>
    </source>
</evidence>
<evidence type="ECO:0000303" key="3">
    <source>
    </source>
</evidence>
<evidence type="ECO:0000303" key="4">
    <source>
    </source>
</evidence>
<evidence type="ECO:0000305" key="5">
    <source>
    </source>
</evidence>
<protein>
    <recommendedName>
        <fullName evidence="4">2-epi-5-epi-valiolone epimerase</fullName>
        <shortName evidence="4">EVE</shortName>
        <ecNumber evidence="2">5.1.3.33</ecNumber>
    </recommendedName>
</protein>